<comment type="function">
    <text evidence="1">This endogenous retroviral envelope protein has retained its original fusogenic properties and participates in trophoblast fusion and the formation of a syncytium during placenta morphogenesis. May recognize and induce fusion through binding of SLC1A4 and SLC1A5 (By similarity).</text>
</comment>
<comment type="function">
    <text evidence="1">Endogenous envelope proteins may have kept, lost or modified their original function during evolution. Retroviral envelope proteins mediate receptor recognition and membrane fusion during early infection. The surface protein (SU) mediates receptor recognition, while the transmembrane protein (TM) acts as a class I viral fusion protein. The protein may have at least 3 conformational states: pre-fusion native state, pre-hairpin intermediate state, and post-fusion hairpin state. During viral and target cell membrane fusion, the coiled coil regions (heptad repeats) assume a trimer-of-hairpins structure, positioning the fusion peptide in close proximity to the C-terminal region of the ectodomain. The formation of this structure appears to drive apposition and subsequent fusion of membranes (By similarity).</text>
</comment>
<comment type="subunit">
    <text evidence="1">The mature envelope protein (Env) consists of a trimer of SU-TM heterodimers attached probably by a labile interchain disulfide bond. Interacts with the C-type lectin CD209/DC-SIGN (By similarity).</text>
</comment>
<comment type="subcellular location">
    <molecule>Surface protein</molecule>
    <subcellularLocation>
        <location evidence="7">Cell membrane</location>
        <topology evidence="7">Peripheral membrane protein</topology>
    </subcellularLocation>
    <text evidence="4">The surface protein is not anchored to the membrane, but localizes to the extracellular surface through its binding to TM.</text>
</comment>
<comment type="subcellular location">
    <molecule>Transmembrane protein</molecule>
    <subcellularLocation>
        <location evidence="7">Cell membrane</location>
        <topology evidence="5">Single-pass type I membrane protein</topology>
    </subcellularLocation>
</comment>
<comment type="subcellular location">
    <molecule>Syncytin-1</molecule>
    <subcellularLocation>
        <location evidence="1">Virion</location>
    </subcellularLocation>
</comment>
<comment type="domain">
    <text evidence="1">The cytoplasmic region is essential for the fusiogenic function.</text>
</comment>
<comment type="domain">
    <text evidence="1">The 17 amino acids long immunosuppressive region is present in many retroviral envelope proteins. Synthetic peptides derived from this relatively conserved sequence inhibit immune function in vitro and in vivo (By similarity).</text>
</comment>
<comment type="PTM">
    <text evidence="1">Specific enzymatic cleavages in vivo yield mature proteins. Envelope glycoproteins are synthesized as an inactive precursor that is heavily N-glycosylated and processed likely by furin in the Golgi to yield the mature SU and TM proteins. The cleavage site between SU and TM requires the minimal sequence [KR]-X-[KR]-R (By similarity).</text>
</comment>
<comment type="PTM">
    <text evidence="1">The CXXC motif is highly conserved across a broad range of retroviral envelope proteins. It is thought to participate in the formation of a labile disulfide bond possibly with the CX6CC motif present in the transmembrane protein (By similarity).</text>
</comment>
<comment type="miscellaneous">
    <text>Ortholog of the human HERV-W_7q21.2 envelope protein.</text>
</comment>
<comment type="miscellaneous">
    <text>The genome contains a high percentage of proviral-like elements, also called endogenous retroviruses (ERVs) that are the genomic traces of ancient infections of the germline by exogenous retroviruses. Although most of these elements are defective, some have conserved a functional envelope (env) gene, most probably diverted by the host for its benefit.</text>
</comment>
<comment type="similarity">
    <text evidence="7">Belongs to the gamma type-C retroviral envelope protein family. HERV class-I W env subfamily.</text>
</comment>
<evidence type="ECO:0000250" key="1"/>
<evidence type="ECO:0000250" key="2">
    <source>
        <dbReference type="UniProtKB" id="P23064"/>
    </source>
</evidence>
<evidence type="ECO:0000250" key="3">
    <source>
        <dbReference type="UniProtKB" id="P60508"/>
    </source>
</evidence>
<evidence type="ECO:0000250" key="4">
    <source>
        <dbReference type="UniProtKB" id="Q9UQF0"/>
    </source>
</evidence>
<evidence type="ECO:0000255" key="5"/>
<evidence type="ECO:0000256" key="6">
    <source>
        <dbReference type="SAM" id="MobiDB-lite"/>
    </source>
</evidence>
<evidence type="ECO:0000305" key="7"/>
<organism>
    <name type="scientific">Pongo pygmaeus</name>
    <name type="common">Bornean orangutan</name>
    <dbReference type="NCBI Taxonomy" id="9600"/>
    <lineage>
        <taxon>Eukaryota</taxon>
        <taxon>Metazoa</taxon>
        <taxon>Chordata</taxon>
        <taxon>Craniata</taxon>
        <taxon>Vertebrata</taxon>
        <taxon>Euteleostomi</taxon>
        <taxon>Mammalia</taxon>
        <taxon>Eutheria</taxon>
        <taxon>Euarchontoglires</taxon>
        <taxon>Primates</taxon>
        <taxon>Haplorrhini</taxon>
        <taxon>Catarrhini</taxon>
        <taxon>Hominidae</taxon>
        <taxon>Pongo</taxon>
    </lineage>
</organism>
<feature type="signal peptide" evidence="5">
    <location>
        <begin position="1"/>
        <end position="20"/>
    </location>
</feature>
<feature type="chain" id="PRO_0000008494" description="Syncytin-1">
    <location>
        <begin position="21"/>
        <end position="538"/>
    </location>
</feature>
<feature type="chain" id="PRO_0000008495" description="Surface protein" evidence="1">
    <location>
        <begin position="21"/>
        <end position="317"/>
    </location>
</feature>
<feature type="chain" id="PRO_0000008496" description="Transmembrane protein" evidence="1">
    <location>
        <begin position="318"/>
        <end position="538"/>
    </location>
</feature>
<feature type="topological domain" description="Extracellular" evidence="5">
    <location>
        <begin position="21"/>
        <end position="443"/>
    </location>
</feature>
<feature type="transmembrane region" description="Helical" evidence="5">
    <location>
        <begin position="444"/>
        <end position="464"/>
    </location>
</feature>
<feature type="topological domain" description="Cytoplasmic" evidence="5">
    <location>
        <begin position="465"/>
        <end position="538"/>
    </location>
</feature>
<feature type="region of interest" description="Fusion peptide" evidence="5">
    <location>
        <begin position="320"/>
        <end position="340"/>
    </location>
</feature>
<feature type="region of interest" description="Immunosuppression" evidence="1">
    <location>
        <begin position="380"/>
        <end position="396"/>
    </location>
</feature>
<feature type="region of interest" description="Essential for the fusiogenic function" evidence="1">
    <location>
        <begin position="465"/>
        <end position="484"/>
    </location>
</feature>
<feature type="region of interest" description="Disordered" evidence="6">
    <location>
        <begin position="501"/>
        <end position="538"/>
    </location>
</feature>
<feature type="short sequence motif" description="CXXC" evidence="7">
    <location>
        <begin position="186"/>
        <end position="189"/>
    </location>
</feature>
<feature type="short sequence motif" description="CX6CC" evidence="7">
    <location>
        <begin position="397"/>
        <end position="405"/>
    </location>
</feature>
<feature type="site" description="Cleavage" evidence="4">
    <location>
        <begin position="317"/>
        <end position="318"/>
    </location>
</feature>
<feature type="glycosylation site" description="N-linked (GlcNAc...) asparagine" evidence="5">
    <location>
        <position position="169"/>
    </location>
</feature>
<feature type="glycosylation site" description="N-linked (GlcNAc...) asparagine" evidence="5">
    <location>
        <position position="208"/>
    </location>
</feature>
<feature type="glycosylation site" description="N-linked (GlcNAc...) asparagine" evidence="5">
    <location>
        <position position="214"/>
    </location>
</feature>
<feature type="glycosylation site" description="N-linked (GlcNAc...) asparagine" evidence="5">
    <location>
        <position position="234"/>
    </location>
</feature>
<feature type="glycosylation site" description="N-linked (GlcNAc...) asparagine" evidence="5">
    <location>
        <position position="242"/>
    </location>
</feature>
<feature type="glycosylation site" description="N-linked (GlcNAc...) asparagine" evidence="5">
    <location>
        <position position="245"/>
    </location>
</feature>
<feature type="glycosylation site" description="N-linked (GlcNAc...) asparagine" evidence="5">
    <location>
        <position position="281"/>
    </location>
</feature>
<feature type="glycosylation site" description="N-linked (GlcNAc...) asparagine" evidence="5">
    <location>
        <position position="409"/>
    </location>
</feature>
<feature type="disulfide bond" description="Interchain (between SU and TM chains, or C-189 with C-405); in linked form" evidence="4">
    <location>
        <begin position="186"/>
        <end position="405"/>
    </location>
</feature>
<feature type="disulfide bond" evidence="2">
    <location>
        <begin position="186"/>
        <end position="189"/>
    </location>
</feature>
<feature type="disulfide bond" evidence="3">
    <location>
        <begin position="397"/>
        <end position="404"/>
    </location>
</feature>
<keyword id="KW-1003">Cell membrane</keyword>
<keyword id="KW-0165">Cleavage on pair of basic residues</keyword>
<keyword id="KW-1015">Disulfide bond</keyword>
<keyword id="KW-0895">ERV</keyword>
<keyword id="KW-0325">Glycoprotein</keyword>
<keyword id="KW-0472">Membrane</keyword>
<keyword id="KW-0732">Signal</keyword>
<keyword id="KW-0812">Transmembrane</keyword>
<keyword id="KW-1133">Transmembrane helix</keyword>
<keyword id="KW-0814">Transposable element</keyword>
<keyword id="KW-0261">Viral envelope protein</keyword>
<keyword id="KW-0946">Virion</keyword>
<gene>
    <name type="primary">ERVW-1</name>
    <name type="synonym">ERVWE1</name>
</gene>
<proteinExistence type="inferred from homology"/>
<sequence>MALPYHIFLFTVLLPSFTLTAPPPCRCMTSSSPYQEFLWRMHHPGNIDAPSYRSFSKGTPTFTAHTHMPRNCYNSATLCMHGNTHYWTGKMINPSCPGGLGVTVCWTYFTHTGMSDGGGVQDEAREKHVKEVISQLTQVHSTSSPYKGLDLSKLHETLRTHTRLVSLFNTTLTGLHEVSAQNPTNCWMCLPLAFRPYVSIPVPEQWNNFSTEINTTSVLVGPLVSNLEITHTSNLTCVKFSNTTNTTNSQCIRWVTPPTQVVCLPSGIFFVCGTSAYRCLNGSSESMCFLSFLVPPMTIYTEQDLYNYVVSKPRNKRVPILPFVMAAGVLGALGTGIGGITTSTQFYYKLSQELNGDMERVADSLVTLQDQLNSIAAVVLQNRRALDLLTAERGGTCLFLGEECCYYVNQSGIVTEKVKEIRDRIQRRAEELRNIGPWGLFSQWMPWILPFLGPLAAIILLLLFGPCIFNLLVNFVSSRIEAVKLQMEPKMQSKTKIYHRPLDWPASPRSDVNDIKGTPPEEISTAQPLLRPNSAGSS</sequence>
<reference key="1">
    <citation type="journal article" date="2004" name="Proc. Natl. Acad. Sci. U.S.A.">
        <title>The endogenous retroviral locus ERVWE1 is a bona fide gene involved in hominoid placental physiology.</title>
        <authorList>
            <person name="Mallet F."/>
            <person name="Bouton O."/>
            <person name="Prudhomme S."/>
            <person name="Cheynet V."/>
            <person name="Oriol G."/>
            <person name="Bonnaud B."/>
            <person name="Lucotte G."/>
            <person name="Duret L."/>
            <person name="Mandrand B."/>
        </authorList>
    </citation>
    <scope>NUCLEOTIDE SEQUENCE [GENOMIC DNA]</scope>
</reference>
<protein>
    <recommendedName>
        <fullName>Syncytin-1</fullName>
    </recommendedName>
    <alternativeName>
        <fullName>ERV-W1 provirus ancestral Env polyprotein</fullName>
    </alternativeName>
    <alternativeName>
        <fullName>ERVWE1 envelope protein</fullName>
    </alternativeName>
    <alternativeName>
        <fullName>Endogenous retrovirus group W member 1</fullName>
    </alternativeName>
    <alternativeName>
        <fullName>Envelope polyprotein</fullName>
    </alternativeName>
    <alternativeName>
        <fullName>Syncytin</fullName>
    </alternativeName>
    <component>
        <recommendedName>
            <fullName>Surface protein</fullName>
            <shortName>SU</shortName>
        </recommendedName>
    </component>
    <component>
        <recommendedName>
            <fullName>Transmembrane protein</fullName>
            <shortName>TM</shortName>
        </recommendedName>
    </component>
</protein>
<dbReference type="EMBL" id="AY101590">
    <property type="protein sequence ID" value="AAM68169.1"/>
    <property type="molecule type" value="Genomic_DNA"/>
</dbReference>
<dbReference type="EMBL" id="AY101591">
    <property type="protein sequence ID" value="AAM68170.1"/>
    <property type="molecule type" value="Genomic_DNA"/>
</dbReference>
<dbReference type="SMR" id="P61564"/>
<dbReference type="GlyCosmos" id="P61564">
    <property type="glycosylation" value="8 sites, No reported glycans"/>
</dbReference>
<dbReference type="GO" id="GO:0005886">
    <property type="term" value="C:plasma membrane"/>
    <property type="evidence" value="ECO:0007669"/>
    <property type="project" value="UniProtKB-SubCell"/>
</dbReference>
<dbReference type="GO" id="GO:0006949">
    <property type="term" value="P:syncytium formation"/>
    <property type="evidence" value="ECO:0000250"/>
    <property type="project" value="UniProtKB"/>
</dbReference>
<dbReference type="GO" id="GO:0000768">
    <property type="term" value="P:syncytium formation by plasma membrane fusion"/>
    <property type="evidence" value="ECO:0007669"/>
    <property type="project" value="TreeGrafter"/>
</dbReference>
<dbReference type="CDD" id="cd09851">
    <property type="entry name" value="HTLV-1-like_HR1-HR2"/>
    <property type="match status" value="1"/>
</dbReference>
<dbReference type="FunFam" id="1.10.287.210:FF:000002">
    <property type="entry name" value="Syncytin-2"/>
    <property type="match status" value="1"/>
</dbReference>
<dbReference type="Gene3D" id="1.10.287.210">
    <property type="match status" value="1"/>
</dbReference>
<dbReference type="InterPro" id="IPR018154">
    <property type="entry name" value="TLV/ENV_coat_polyprotein"/>
</dbReference>
<dbReference type="PANTHER" id="PTHR10424:SF48">
    <property type="entry name" value="SYNCYTIN-1"/>
    <property type="match status" value="1"/>
</dbReference>
<dbReference type="PANTHER" id="PTHR10424">
    <property type="entry name" value="VIRAL ENVELOPE PROTEIN"/>
    <property type="match status" value="1"/>
</dbReference>
<dbReference type="Pfam" id="PF00429">
    <property type="entry name" value="TLV_coat"/>
    <property type="match status" value="1"/>
</dbReference>
<dbReference type="SUPFAM" id="SSF58069">
    <property type="entry name" value="Virus ectodomain"/>
    <property type="match status" value="1"/>
</dbReference>
<accession>P61564</accession>
<name>SYCY1_PONPY</name>